<keyword id="KW-0521">NADP</keyword>
<keyword id="KW-0560">Oxidoreductase</keyword>
<keyword id="KW-0627">Porphyrin biosynthesis</keyword>
<keyword id="KW-1185">Reference proteome</keyword>
<evidence type="ECO:0000255" key="1">
    <source>
        <dbReference type="HAMAP-Rule" id="MF_00087"/>
    </source>
</evidence>
<evidence type="ECO:0000256" key="2">
    <source>
        <dbReference type="SAM" id="MobiDB-lite"/>
    </source>
</evidence>
<reference key="1">
    <citation type="submission" date="2008-04" db="EMBL/GenBank/DDBJ databases">
        <title>Complete sequence of chromosome of Natranaerobius thermophilus JW/NM-WN-LF.</title>
        <authorList>
            <consortium name="US DOE Joint Genome Institute"/>
            <person name="Copeland A."/>
            <person name="Lucas S."/>
            <person name="Lapidus A."/>
            <person name="Glavina del Rio T."/>
            <person name="Dalin E."/>
            <person name="Tice H."/>
            <person name="Bruce D."/>
            <person name="Goodwin L."/>
            <person name="Pitluck S."/>
            <person name="Chertkov O."/>
            <person name="Brettin T."/>
            <person name="Detter J.C."/>
            <person name="Han C."/>
            <person name="Kuske C.R."/>
            <person name="Schmutz J."/>
            <person name="Larimer F."/>
            <person name="Land M."/>
            <person name="Hauser L."/>
            <person name="Kyrpides N."/>
            <person name="Lykidis A."/>
            <person name="Mesbah N.M."/>
            <person name="Wiegel J."/>
        </authorList>
    </citation>
    <scope>NUCLEOTIDE SEQUENCE [LARGE SCALE GENOMIC DNA]</scope>
    <source>
        <strain>ATCC BAA-1301 / DSM 18059 / JW/NM-WN-LF</strain>
    </source>
</reference>
<accession>B2A1G4</accession>
<proteinExistence type="inferred from homology"/>
<feature type="chain" id="PRO_1000093153" description="Glutamyl-tRNA reductase">
    <location>
        <begin position="1"/>
        <end position="458"/>
    </location>
</feature>
<feature type="region of interest" description="Disordered" evidence="2">
    <location>
        <begin position="426"/>
        <end position="458"/>
    </location>
</feature>
<feature type="compositionally biased region" description="Basic and acidic residues" evidence="2">
    <location>
        <begin position="426"/>
        <end position="440"/>
    </location>
</feature>
<feature type="compositionally biased region" description="Basic and acidic residues" evidence="2">
    <location>
        <begin position="448"/>
        <end position="458"/>
    </location>
</feature>
<feature type="active site" description="Nucleophile" evidence="1">
    <location>
        <position position="50"/>
    </location>
</feature>
<feature type="binding site" evidence="1">
    <location>
        <begin position="49"/>
        <end position="52"/>
    </location>
    <ligand>
        <name>substrate</name>
    </ligand>
</feature>
<feature type="binding site" evidence="1">
    <location>
        <position position="111"/>
    </location>
    <ligand>
        <name>substrate</name>
    </ligand>
</feature>
<feature type="binding site" evidence="1">
    <location>
        <begin position="116"/>
        <end position="118"/>
    </location>
    <ligand>
        <name>substrate</name>
    </ligand>
</feature>
<feature type="binding site" evidence="1">
    <location>
        <position position="122"/>
    </location>
    <ligand>
        <name>substrate</name>
    </ligand>
</feature>
<feature type="binding site" evidence="1">
    <location>
        <begin position="191"/>
        <end position="196"/>
    </location>
    <ligand>
        <name>NADP(+)</name>
        <dbReference type="ChEBI" id="CHEBI:58349"/>
    </ligand>
</feature>
<feature type="site" description="Important for activity" evidence="1">
    <location>
        <position position="101"/>
    </location>
</feature>
<organism>
    <name type="scientific">Natranaerobius thermophilus (strain ATCC BAA-1301 / DSM 18059 / JW/NM-WN-LF)</name>
    <dbReference type="NCBI Taxonomy" id="457570"/>
    <lineage>
        <taxon>Bacteria</taxon>
        <taxon>Bacillati</taxon>
        <taxon>Bacillota</taxon>
        <taxon>Clostridia</taxon>
        <taxon>Natranaerobiales</taxon>
        <taxon>Natranaerobiaceae</taxon>
        <taxon>Natranaerobius</taxon>
    </lineage>
</organism>
<name>HEM1_NATTJ</name>
<protein>
    <recommendedName>
        <fullName evidence="1">Glutamyl-tRNA reductase</fullName>
        <shortName evidence="1">GluTR</shortName>
        <ecNumber evidence="1">1.2.1.70</ecNumber>
    </recommendedName>
</protein>
<sequence>MILAVIGINHETASVETREQLAFSSKQVKELVQKLIEGQPIKEASVLSTCNRTEVHFTVNTGQIEAGKNHIMTYLSDFSDLDPREYVDHLYFITDQEAVSHIFKVTAGLNSLVTGETEILGQVKKAYQLSDEAGGVDSIFHGLYQQALRTGKRVHRETGINDNAASVSYASVELATKIFGSLQNRRALIIGAGKMSELAARHLYSNGVKDVIVINRTIERAKNLADKFGGLYASYDQLSEWLNEIDIVITSTGAPHFVIKEEQIKRAMKSRKYSPMFLIDIAVPRDVEPSVNNQDNAYLYTIDDLEAVVESNMQERQEEARNAELIISEEVAEFMVWYKTRDVVPLISALREKAEDVRKMELEKYHKKLKNLSPKEQEAVDKLTKSIVNKILKEPVLRIKEFAVEDKSELYMATLAQLFDLEDEVIPKDGEEHSSSKEVESVTQSSTERGHHESDFHN</sequence>
<gene>
    <name evidence="1" type="primary">hemA</name>
    <name type="ordered locus">Nther_1121</name>
</gene>
<comment type="function">
    <text evidence="1">Catalyzes the NADPH-dependent reduction of glutamyl-tRNA(Glu) to glutamate 1-semialdehyde (GSA).</text>
</comment>
<comment type="catalytic activity">
    <reaction evidence="1">
        <text>(S)-4-amino-5-oxopentanoate + tRNA(Glu) + NADP(+) = L-glutamyl-tRNA(Glu) + NADPH + H(+)</text>
        <dbReference type="Rhea" id="RHEA:12344"/>
        <dbReference type="Rhea" id="RHEA-COMP:9663"/>
        <dbReference type="Rhea" id="RHEA-COMP:9680"/>
        <dbReference type="ChEBI" id="CHEBI:15378"/>
        <dbReference type="ChEBI" id="CHEBI:57501"/>
        <dbReference type="ChEBI" id="CHEBI:57783"/>
        <dbReference type="ChEBI" id="CHEBI:58349"/>
        <dbReference type="ChEBI" id="CHEBI:78442"/>
        <dbReference type="ChEBI" id="CHEBI:78520"/>
        <dbReference type="EC" id="1.2.1.70"/>
    </reaction>
</comment>
<comment type="pathway">
    <text evidence="1">Porphyrin-containing compound metabolism; protoporphyrin-IX biosynthesis; 5-aminolevulinate from L-glutamyl-tRNA(Glu): step 1/2.</text>
</comment>
<comment type="subunit">
    <text evidence="1">Homodimer.</text>
</comment>
<comment type="domain">
    <text evidence="1">Possesses an unusual extended V-shaped dimeric structure with each monomer consisting of three distinct domains arranged along a curved 'spinal' alpha-helix. The N-terminal catalytic domain specifically recognizes the glutamate moiety of the substrate. The second domain is the NADPH-binding domain, and the third C-terminal domain is responsible for dimerization.</text>
</comment>
<comment type="miscellaneous">
    <text evidence="1">During catalysis, the active site Cys acts as a nucleophile attacking the alpha-carbonyl group of tRNA-bound glutamate with the formation of a thioester intermediate between enzyme and glutamate, and the concomitant release of tRNA(Glu). The thioester intermediate is finally reduced by direct hydride transfer from NADPH, to form the product GSA.</text>
</comment>
<comment type="similarity">
    <text evidence="1">Belongs to the glutamyl-tRNA reductase family.</text>
</comment>
<dbReference type="EC" id="1.2.1.70" evidence="1"/>
<dbReference type="EMBL" id="CP001034">
    <property type="protein sequence ID" value="ACB84704.1"/>
    <property type="molecule type" value="Genomic_DNA"/>
</dbReference>
<dbReference type="RefSeq" id="WP_012447579.1">
    <property type="nucleotide sequence ID" value="NC_010718.1"/>
</dbReference>
<dbReference type="SMR" id="B2A1G4"/>
<dbReference type="FunCoup" id="B2A1G4">
    <property type="interactions" value="329"/>
</dbReference>
<dbReference type="STRING" id="457570.Nther_1121"/>
<dbReference type="KEGG" id="nth:Nther_1121"/>
<dbReference type="eggNOG" id="COG0373">
    <property type="taxonomic scope" value="Bacteria"/>
</dbReference>
<dbReference type="HOGENOM" id="CLU_035113_2_2_9"/>
<dbReference type="InParanoid" id="B2A1G4"/>
<dbReference type="OrthoDB" id="110209at2"/>
<dbReference type="UniPathway" id="UPA00251">
    <property type="reaction ID" value="UER00316"/>
</dbReference>
<dbReference type="Proteomes" id="UP000001683">
    <property type="component" value="Chromosome"/>
</dbReference>
<dbReference type="GO" id="GO:0008883">
    <property type="term" value="F:glutamyl-tRNA reductase activity"/>
    <property type="evidence" value="ECO:0007669"/>
    <property type="project" value="UniProtKB-UniRule"/>
</dbReference>
<dbReference type="GO" id="GO:0050661">
    <property type="term" value="F:NADP binding"/>
    <property type="evidence" value="ECO:0007669"/>
    <property type="project" value="InterPro"/>
</dbReference>
<dbReference type="GO" id="GO:0019353">
    <property type="term" value="P:protoporphyrinogen IX biosynthetic process from glutamate"/>
    <property type="evidence" value="ECO:0007669"/>
    <property type="project" value="TreeGrafter"/>
</dbReference>
<dbReference type="CDD" id="cd05213">
    <property type="entry name" value="NAD_bind_Glutamyl_tRNA_reduct"/>
    <property type="match status" value="1"/>
</dbReference>
<dbReference type="FunFam" id="3.30.460.30:FF:000001">
    <property type="entry name" value="Glutamyl-tRNA reductase"/>
    <property type="match status" value="1"/>
</dbReference>
<dbReference type="FunFam" id="3.40.50.720:FF:000031">
    <property type="entry name" value="Glutamyl-tRNA reductase"/>
    <property type="match status" value="1"/>
</dbReference>
<dbReference type="Gene3D" id="3.30.460.30">
    <property type="entry name" value="Glutamyl-tRNA reductase, N-terminal domain"/>
    <property type="match status" value="1"/>
</dbReference>
<dbReference type="Gene3D" id="3.40.50.720">
    <property type="entry name" value="NAD(P)-binding Rossmann-like Domain"/>
    <property type="match status" value="1"/>
</dbReference>
<dbReference type="HAMAP" id="MF_00087">
    <property type="entry name" value="Glu_tRNA_reductase"/>
    <property type="match status" value="1"/>
</dbReference>
<dbReference type="InterPro" id="IPR000343">
    <property type="entry name" value="4pyrrol_synth_GluRdtase"/>
</dbReference>
<dbReference type="InterPro" id="IPR015896">
    <property type="entry name" value="4pyrrol_synth_GluRdtase_dimer"/>
</dbReference>
<dbReference type="InterPro" id="IPR015895">
    <property type="entry name" value="4pyrrol_synth_GluRdtase_N"/>
</dbReference>
<dbReference type="InterPro" id="IPR036453">
    <property type="entry name" value="GluRdtase_dimer_dom_sf"/>
</dbReference>
<dbReference type="InterPro" id="IPR036343">
    <property type="entry name" value="GluRdtase_N_sf"/>
</dbReference>
<dbReference type="InterPro" id="IPR036291">
    <property type="entry name" value="NAD(P)-bd_dom_sf"/>
</dbReference>
<dbReference type="InterPro" id="IPR006151">
    <property type="entry name" value="Shikm_DH/Glu-tRNA_Rdtase"/>
</dbReference>
<dbReference type="NCBIfam" id="TIGR01035">
    <property type="entry name" value="hemA"/>
    <property type="match status" value="1"/>
</dbReference>
<dbReference type="NCBIfam" id="NF000744">
    <property type="entry name" value="PRK00045.1-3"/>
    <property type="match status" value="1"/>
</dbReference>
<dbReference type="PANTHER" id="PTHR43013">
    <property type="entry name" value="GLUTAMYL-TRNA REDUCTASE"/>
    <property type="match status" value="1"/>
</dbReference>
<dbReference type="PANTHER" id="PTHR43013:SF1">
    <property type="entry name" value="GLUTAMYL-TRNA REDUCTASE"/>
    <property type="match status" value="1"/>
</dbReference>
<dbReference type="Pfam" id="PF00745">
    <property type="entry name" value="GlutR_dimer"/>
    <property type="match status" value="1"/>
</dbReference>
<dbReference type="Pfam" id="PF05201">
    <property type="entry name" value="GlutR_N"/>
    <property type="match status" value="1"/>
</dbReference>
<dbReference type="Pfam" id="PF01488">
    <property type="entry name" value="Shikimate_DH"/>
    <property type="match status" value="1"/>
</dbReference>
<dbReference type="PIRSF" id="PIRSF000445">
    <property type="entry name" value="4pyrrol_synth_GluRdtase"/>
    <property type="match status" value="1"/>
</dbReference>
<dbReference type="SUPFAM" id="SSF69742">
    <property type="entry name" value="Glutamyl tRNA-reductase catalytic, N-terminal domain"/>
    <property type="match status" value="1"/>
</dbReference>
<dbReference type="SUPFAM" id="SSF69075">
    <property type="entry name" value="Glutamyl tRNA-reductase dimerization domain"/>
    <property type="match status" value="1"/>
</dbReference>
<dbReference type="SUPFAM" id="SSF51735">
    <property type="entry name" value="NAD(P)-binding Rossmann-fold domains"/>
    <property type="match status" value="1"/>
</dbReference>